<proteinExistence type="evidence at protein level"/>
<feature type="chain" id="PRO_0000142357" description="Metalloprotease TldD">
    <location>
        <begin position="1"/>
        <end position="481"/>
    </location>
</feature>
<feature type="helix" evidence="4">
    <location>
        <begin position="3"/>
        <end position="10"/>
    </location>
</feature>
<feature type="helix" evidence="4">
    <location>
        <begin position="12"/>
        <end position="14"/>
    </location>
</feature>
<feature type="helix" evidence="4">
    <location>
        <begin position="18"/>
        <end position="29"/>
    </location>
</feature>
<feature type="strand" evidence="4">
    <location>
        <begin position="34"/>
        <end position="51"/>
    </location>
</feature>
<feature type="strand" evidence="4">
    <location>
        <begin position="54"/>
        <end position="72"/>
    </location>
</feature>
<feature type="strand" evidence="4">
    <location>
        <begin position="75"/>
        <end position="83"/>
    </location>
</feature>
<feature type="helix" evidence="4">
    <location>
        <begin position="86"/>
        <end position="96"/>
    </location>
</feature>
<feature type="helix" evidence="4">
    <location>
        <begin position="97"/>
        <end position="99"/>
    </location>
</feature>
<feature type="turn" evidence="4">
    <location>
        <begin position="125"/>
        <end position="127"/>
    </location>
</feature>
<feature type="helix" evidence="4">
    <location>
        <begin position="131"/>
        <end position="148"/>
    </location>
</feature>
<feature type="strand" evidence="4">
    <location>
        <begin position="152"/>
        <end position="170"/>
    </location>
</feature>
<feature type="strand" evidence="4">
    <location>
        <begin position="173"/>
        <end position="193"/>
    </location>
</feature>
<feature type="strand" evidence="4">
    <location>
        <begin position="196"/>
        <end position="208"/>
    </location>
</feature>
<feature type="helix" evidence="4">
    <location>
        <begin position="210"/>
        <end position="214"/>
    </location>
</feature>
<feature type="strand" evidence="4">
    <location>
        <begin position="215"/>
        <end position="217"/>
    </location>
</feature>
<feature type="helix" evidence="4">
    <location>
        <begin position="222"/>
        <end position="239"/>
    </location>
</feature>
<feature type="strand" evidence="4">
    <location>
        <begin position="245"/>
        <end position="252"/>
    </location>
</feature>
<feature type="helix" evidence="4">
    <location>
        <begin position="256"/>
        <end position="258"/>
    </location>
</feature>
<feature type="helix" evidence="4">
    <location>
        <begin position="259"/>
        <end position="264"/>
    </location>
</feature>
<feature type="helix" evidence="4">
    <location>
        <begin position="267"/>
        <end position="269"/>
    </location>
</feature>
<feature type="helix" evidence="4">
    <location>
        <begin position="271"/>
        <end position="275"/>
    </location>
</feature>
<feature type="turn" evidence="4">
    <location>
        <begin position="280"/>
        <end position="283"/>
    </location>
</feature>
<feature type="strand" evidence="4">
    <location>
        <begin position="296"/>
        <end position="299"/>
    </location>
</feature>
<feature type="strand" evidence="4">
    <location>
        <begin position="320"/>
        <end position="325"/>
    </location>
</feature>
<feature type="helix" evidence="4">
    <location>
        <begin position="336"/>
        <end position="342"/>
    </location>
</feature>
<feature type="strand" evidence="4">
    <location>
        <begin position="364"/>
        <end position="368"/>
    </location>
</feature>
<feature type="helix" evidence="4">
    <location>
        <begin position="375"/>
        <end position="380"/>
    </location>
</feature>
<feature type="strand" evidence="4">
    <location>
        <begin position="383"/>
        <end position="397"/>
    </location>
</feature>
<feature type="turn" evidence="4">
    <location>
        <begin position="398"/>
        <end position="401"/>
    </location>
</feature>
<feature type="strand" evidence="4">
    <location>
        <begin position="402"/>
        <end position="414"/>
    </location>
</feature>
<feature type="strand" evidence="4">
    <location>
        <begin position="417"/>
        <end position="422"/>
    </location>
</feature>
<feature type="strand" evidence="4">
    <location>
        <begin position="426"/>
        <end position="430"/>
    </location>
</feature>
<feature type="helix" evidence="4">
    <location>
        <begin position="431"/>
        <end position="436"/>
    </location>
</feature>
<feature type="strand" evidence="4">
    <location>
        <begin position="438"/>
        <end position="443"/>
    </location>
</feature>
<feature type="strand" evidence="4">
    <location>
        <begin position="452"/>
        <end position="456"/>
    </location>
</feature>
<feature type="strand" evidence="4">
    <location>
        <begin position="459"/>
        <end position="467"/>
    </location>
</feature>
<feature type="strand" evidence="4">
    <location>
        <begin position="470"/>
        <end position="478"/>
    </location>
</feature>
<accession>P0AGG8</accession>
<accession>P46473</accession>
<accession>Q2M8W9</accession>
<comment type="function">
    <text evidence="1">Metalloprotease involved in CcdA degradation. Suppresses the inhibitory activity of the carbon storage regulator (CsrA).</text>
</comment>
<comment type="miscellaneous">
    <text evidence="3">In strains containing the pMccB17 plasmid, required for the maturation and secretion of the antibiotic bacteriocin microcin B17 (MccB17).</text>
</comment>
<comment type="similarity">
    <text evidence="2">Belongs to the peptidase U62 family.</text>
</comment>
<keyword id="KW-0002">3D-structure</keyword>
<keyword id="KW-0378">Hydrolase</keyword>
<keyword id="KW-0482">Metalloprotease</keyword>
<keyword id="KW-0645">Protease</keyword>
<keyword id="KW-1185">Reference proteome</keyword>
<gene>
    <name type="primary">tldD</name>
    <name type="synonym">yhdO</name>
    <name type="ordered locus">b3244</name>
    <name type="ordered locus">JW3213</name>
</gene>
<reference key="1">
    <citation type="journal article" date="1996" name="J. Mol. Biol.">
        <title>Evidence for involvement of Escherichia coli genes pmbA, csrA and a previously unrecognized gene tldD, in the control of DNA gyrase by letD (ccdB) of sex factor F.</title>
        <authorList>
            <person name="Murayama N."/>
            <person name="Shimizu H."/>
            <person name="Takiguchi S."/>
            <person name="Baba Y."/>
            <person name="Amino H."/>
            <person name="Horiuchi T."/>
            <person name="Sekimizu K."/>
            <person name="Miki T."/>
        </authorList>
    </citation>
    <scope>NUCLEOTIDE SEQUENCE [GENOMIC DNA]</scope>
    <scope>CHARACTERIZATION</scope>
    <source>
        <strain>K12</strain>
    </source>
</reference>
<reference key="2">
    <citation type="journal article" date="1997" name="Science">
        <title>The complete genome sequence of Escherichia coli K-12.</title>
        <authorList>
            <person name="Blattner F.R."/>
            <person name="Plunkett G. III"/>
            <person name="Bloch C.A."/>
            <person name="Perna N.T."/>
            <person name="Burland V."/>
            <person name="Riley M."/>
            <person name="Collado-Vides J."/>
            <person name="Glasner J.D."/>
            <person name="Rode C.K."/>
            <person name="Mayhew G.F."/>
            <person name="Gregor J."/>
            <person name="Davis N.W."/>
            <person name="Kirkpatrick H.A."/>
            <person name="Goeden M.A."/>
            <person name="Rose D.J."/>
            <person name="Mau B."/>
            <person name="Shao Y."/>
        </authorList>
    </citation>
    <scope>NUCLEOTIDE SEQUENCE [LARGE SCALE GENOMIC DNA]</scope>
    <source>
        <strain>K12 / MG1655 / ATCC 47076</strain>
    </source>
</reference>
<reference key="3">
    <citation type="journal article" date="2006" name="Mol. Syst. Biol.">
        <title>Highly accurate genome sequences of Escherichia coli K-12 strains MG1655 and W3110.</title>
        <authorList>
            <person name="Hayashi K."/>
            <person name="Morooka N."/>
            <person name="Yamamoto Y."/>
            <person name="Fujita K."/>
            <person name="Isono K."/>
            <person name="Choi S."/>
            <person name="Ohtsubo E."/>
            <person name="Baba T."/>
            <person name="Wanner B.L."/>
            <person name="Mori H."/>
            <person name="Horiuchi T."/>
        </authorList>
    </citation>
    <scope>NUCLEOTIDE SEQUENCE [LARGE SCALE GENOMIC DNA]</scope>
    <source>
        <strain>K12 / W3110 / ATCC 27325 / DSM 5911</strain>
    </source>
</reference>
<reference key="4">
    <citation type="journal article" date="2002" name="J. Bacteriol.">
        <title>The highly conserved TldD and TldE proteins of Escherichia coli are involved in microcin B17 processing and in CcdA degradation.</title>
        <authorList>
            <person name="Allali N."/>
            <person name="Afif H."/>
            <person name="Couturier M."/>
            <person name="Van Melderen L."/>
        </authorList>
    </citation>
    <scope>FUNCTION</scope>
    <source>
        <strain>K12</strain>
    </source>
</reference>
<evidence type="ECO:0000269" key="1">
    <source>
    </source>
</evidence>
<evidence type="ECO:0000305" key="2"/>
<evidence type="ECO:0000305" key="3">
    <source>
    </source>
</evidence>
<evidence type="ECO:0007829" key="4">
    <source>
        <dbReference type="PDB" id="5NJ9"/>
    </source>
</evidence>
<sequence length="481" mass="51364">MSLNLVSEQLLAANGLKHQDLFAILGQLAERRLDYGDLYFQSSYHESWVLEDRIIKDGSYNIDQGVGVRAISGEKTGFAYADQISLLALEQSAQAARTIVRDSGDGKVQTLGAVEHSPLYTSVDPLQSMSREEKLDILRRVDKVAREADKRVQEVTASLSGVYELILVAATDGTLAADVRPLVRLSVSVLVEEDGKRERGASGGGGRFGYEFFLADLDGEVRADAWAKEAVRMALVNLSAVAAPAGTMPVVLGAGWPGVLLHEAVGHGLEGDFNRRGTSVFSGQVGELVASELCTVVDDGTMVDRRGSVAIDDEGTPGQYNVLIENGILKGYMQDKLNARLMGMTPTGNGRRESYAHLPMPRMTNTYMLPGKSTPQEIIESVEYGIYAPNFGGGQVDITSGKFVFSTSEAYLIENGKVTKPVKGATLIGSGIETMQQISMVGNDLKLDNGVGVCGKEGQSLPVGVGQPTLKVDNLTVGGTA</sequence>
<organism>
    <name type="scientific">Escherichia coli (strain K12)</name>
    <dbReference type="NCBI Taxonomy" id="83333"/>
    <lineage>
        <taxon>Bacteria</taxon>
        <taxon>Pseudomonadati</taxon>
        <taxon>Pseudomonadota</taxon>
        <taxon>Gammaproteobacteria</taxon>
        <taxon>Enterobacterales</taxon>
        <taxon>Enterobacteriaceae</taxon>
        <taxon>Escherichia</taxon>
    </lineage>
</organism>
<name>TLDD_ECOLI</name>
<dbReference type="EC" id="3.4.-.-"/>
<dbReference type="EMBL" id="D44451">
    <property type="protein sequence ID" value="BAA07913.1"/>
    <property type="molecule type" value="Genomic_DNA"/>
</dbReference>
<dbReference type="EMBL" id="U18997">
    <property type="protein sequence ID" value="AAA58046.1"/>
    <property type="molecule type" value="Genomic_DNA"/>
</dbReference>
<dbReference type="EMBL" id="U00096">
    <property type="protein sequence ID" value="AAC76276.1"/>
    <property type="molecule type" value="Genomic_DNA"/>
</dbReference>
<dbReference type="EMBL" id="AP009048">
    <property type="protein sequence ID" value="BAE77287.1"/>
    <property type="molecule type" value="Genomic_DNA"/>
</dbReference>
<dbReference type="PIR" id="F65116">
    <property type="entry name" value="F65116"/>
</dbReference>
<dbReference type="RefSeq" id="NP_417711.1">
    <property type="nucleotide sequence ID" value="NC_000913.3"/>
</dbReference>
<dbReference type="RefSeq" id="WP_000055909.1">
    <property type="nucleotide sequence ID" value="NZ_STEB01000012.1"/>
</dbReference>
<dbReference type="PDB" id="5NJ5">
    <property type="method" value="X-ray"/>
    <property type="resolution" value="1.90 A"/>
    <property type="chains" value="A/C=1-481"/>
</dbReference>
<dbReference type="PDB" id="5NJ9">
    <property type="method" value="X-ray"/>
    <property type="resolution" value="1.25 A"/>
    <property type="chains" value="A/C=1-481"/>
</dbReference>
<dbReference type="PDB" id="5NJA">
    <property type="method" value="X-ray"/>
    <property type="resolution" value="1.40 A"/>
    <property type="chains" value="A/C=1-481"/>
</dbReference>
<dbReference type="PDB" id="5NJB">
    <property type="method" value="X-ray"/>
    <property type="resolution" value="1.50 A"/>
    <property type="chains" value="A/C=1-481"/>
</dbReference>
<dbReference type="PDB" id="5NJC">
    <property type="method" value="X-ray"/>
    <property type="resolution" value="1.35 A"/>
    <property type="chains" value="A/C=1-481"/>
</dbReference>
<dbReference type="PDB" id="5NJF">
    <property type="method" value="X-ray"/>
    <property type="resolution" value="1.42 A"/>
    <property type="chains" value="A/C=1-481"/>
</dbReference>
<dbReference type="PDBsum" id="5NJ5"/>
<dbReference type="PDBsum" id="5NJ9"/>
<dbReference type="PDBsum" id="5NJA"/>
<dbReference type="PDBsum" id="5NJB"/>
<dbReference type="PDBsum" id="5NJC"/>
<dbReference type="PDBsum" id="5NJF"/>
<dbReference type="SMR" id="P0AGG8"/>
<dbReference type="BioGRID" id="4260797">
    <property type="interactions" value="23"/>
</dbReference>
<dbReference type="DIP" id="DIP-47845N"/>
<dbReference type="FunCoup" id="P0AGG8">
    <property type="interactions" value="221"/>
</dbReference>
<dbReference type="IntAct" id="P0AGG8">
    <property type="interactions" value="4"/>
</dbReference>
<dbReference type="STRING" id="511145.b3244"/>
<dbReference type="jPOST" id="P0AGG8"/>
<dbReference type="PaxDb" id="511145-b3244"/>
<dbReference type="EnsemblBacteria" id="AAC76276">
    <property type="protein sequence ID" value="AAC76276"/>
    <property type="gene ID" value="b3244"/>
</dbReference>
<dbReference type="GeneID" id="75173414"/>
<dbReference type="GeneID" id="947749"/>
<dbReference type="KEGG" id="ecj:JW3213"/>
<dbReference type="KEGG" id="eco:b3244"/>
<dbReference type="KEGG" id="ecoc:C3026_17645"/>
<dbReference type="PATRIC" id="fig|1411691.4.peg.3484"/>
<dbReference type="EchoBASE" id="EB2677"/>
<dbReference type="eggNOG" id="COG0312">
    <property type="taxonomic scope" value="Bacteria"/>
</dbReference>
<dbReference type="HOGENOM" id="CLU_026425_1_0_6"/>
<dbReference type="InParanoid" id="P0AGG8"/>
<dbReference type="OMA" id="PVQRMAN"/>
<dbReference type="OrthoDB" id="9803213at2"/>
<dbReference type="PhylomeDB" id="P0AGG8"/>
<dbReference type="BioCyc" id="EcoCyc:G7689-MONOMER"/>
<dbReference type="BioCyc" id="MetaCyc:76890-MONOMER"/>
<dbReference type="PRO" id="PR:P0AGG8"/>
<dbReference type="Proteomes" id="UP000000625">
    <property type="component" value="Chromosome"/>
</dbReference>
<dbReference type="GO" id="GO:0005829">
    <property type="term" value="C:cytosol"/>
    <property type="evidence" value="ECO:0000314"/>
    <property type="project" value="EcoCyc"/>
</dbReference>
<dbReference type="GO" id="GO:1905368">
    <property type="term" value="C:peptidase complex"/>
    <property type="evidence" value="ECO:0000314"/>
    <property type="project" value="EcoCyc"/>
</dbReference>
<dbReference type="GO" id="GO:0005506">
    <property type="term" value="F:iron ion binding"/>
    <property type="evidence" value="ECO:0000314"/>
    <property type="project" value="EcoCyc"/>
</dbReference>
<dbReference type="GO" id="GO:0008237">
    <property type="term" value="F:metallopeptidase activity"/>
    <property type="evidence" value="ECO:0007669"/>
    <property type="project" value="UniProtKB-KW"/>
</dbReference>
<dbReference type="GO" id="GO:0008270">
    <property type="term" value="F:zinc ion binding"/>
    <property type="evidence" value="ECO:0000314"/>
    <property type="project" value="EcoCyc"/>
</dbReference>
<dbReference type="GO" id="GO:0016485">
    <property type="term" value="P:protein processing"/>
    <property type="evidence" value="ECO:0000315"/>
    <property type="project" value="EcoCyc"/>
</dbReference>
<dbReference type="FunFam" id="3.30.2290.10:FF:000001">
    <property type="entry name" value="Metalloprotease TldD homolog"/>
    <property type="match status" value="1"/>
</dbReference>
<dbReference type="Gene3D" id="3.30.2290.10">
    <property type="entry name" value="PmbA/TldD superfamily"/>
    <property type="match status" value="1"/>
</dbReference>
<dbReference type="InterPro" id="IPR045569">
    <property type="entry name" value="Metalloprtase-TldD/E_C"/>
</dbReference>
<dbReference type="InterPro" id="IPR045570">
    <property type="entry name" value="Metalloprtase-TldD/E_cen_dom"/>
</dbReference>
<dbReference type="InterPro" id="IPR002510">
    <property type="entry name" value="Metalloprtase-TldD/E_N"/>
</dbReference>
<dbReference type="InterPro" id="IPR051463">
    <property type="entry name" value="Peptidase_U62_metallo"/>
</dbReference>
<dbReference type="InterPro" id="IPR025502">
    <property type="entry name" value="TldD"/>
</dbReference>
<dbReference type="InterPro" id="IPR035068">
    <property type="entry name" value="TldD/PmbA_N"/>
</dbReference>
<dbReference type="InterPro" id="IPR036059">
    <property type="entry name" value="TldD/PmbA_sf"/>
</dbReference>
<dbReference type="NCBIfam" id="NF008006">
    <property type="entry name" value="PRK10735.1"/>
    <property type="match status" value="1"/>
</dbReference>
<dbReference type="PANTHER" id="PTHR30624:SF4">
    <property type="entry name" value="METALLOPROTEASE TLDD"/>
    <property type="match status" value="1"/>
</dbReference>
<dbReference type="PANTHER" id="PTHR30624">
    <property type="entry name" value="UNCHARACTERIZED PROTEIN TLDD AND PMBA"/>
    <property type="match status" value="1"/>
</dbReference>
<dbReference type="Pfam" id="PF01523">
    <property type="entry name" value="PmbA_TldD_1st"/>
    <property type="match status" value="1"/>
</dbReference>
<dbReference type="Pfam" id="PF19290">
    <property type="entry name" value="PmbA_TldD_2nd"/>
    <property type="match status" value="1"/>
</dbReference>
<dbReference type="Pfam" id="PF19289">
    <property type="entry name" value="PmbA_TldD_3rd"/>
    <property type="match status" value="1"/>
</dbReference>
<dbReference type="PIRSF" id="PIRSF004919">
    <property type="entry name" value="TldD"/>
    <property type="match status" value="1"/>
</dbReference>
<dbReference type="SUPFAM" id="SSF111283">
    <property type="entry name" value="Putative modulator of DNA gyrase, PmbA/TldD"/>
    <property type="match status" value="1"/>
</dbReference>
<protein>
    <recommendedName>
        <fullName>Metalloprotease TldD</fullName>
        <ecNumber>3.4.-.-</ecNumber>
    </recommendedName>
</protein>